<gene>
    <name type="primary">APOE</name>
</gene>
<organism>
    <name type="scientific">Alligator mississippiensis</name>
    <name type="common">American alligator</name>
    <dbReference type="NCBI Taxonomy" id="8496"/>
    <lineage>
        <taxon>Eukaryota</taxon>
        <taxon>Metazoa</taxon>
        <taxon>Chordata</taxon>
        <taxon>Craniata</taxon>
        <taxon>Vertebrata</taxon>
        <taxon>Euteleostomi</taxon>
        <taxon>Archelosauria</taxon>
        <taxon>Archosauria</taxon>
        <taxon>Crocodylia</taxon>
        <taxon>Alligatoridae</taxon>
        <taxon>Alligatorinae</taxon>
        <taxon>Alligator</taxon>
    </lineage>
</organism>
<name>APOE_ALLMI</name>
<protein>
    <recommendedName>
        <fullName>Apolipoprotein E</fullName>
        <shortName>Apo-E</shortName>
    </recommendedName>
</protein>
<reference key="1">
    <citation type="submission" date="2012-07" db="EMBL/GenBank/DDBJ databases">
        <authorList>
            <person name="St John J.A."/>
            <person name="Green R.E."/>
            <person name="Braun E.L."/>
            <person name="Ray D.A."/>
        </authorList>
    </citation>
    <scope>NUCLEOTIDE SEQUENCE [LARGE SCALE GENOMIC DNA]</scope>
</reference>
<reference key="2">
    <citation type="unpublished observations" date="2016-02">
        <authorList>
            <person name="Puppione D.L."/>
        </authorList>
    </citation>
    <scope>IDENTIFICATION</scope>
</reference>
<comment type="function">
    <text evidence="1">APOE is an apolipoprotein, a protein associating with lipid particles, that mainly functions in lipoprotein-mediated lipid transport between organs via the plasma and interstitial fluids. APOE is a core component of plasma lipoproteins and is involved in their production, conversion and clearance. Apolipoproteins are amphipathic molecules that interact both with lipids of the lipoprotein particle core and the aqueous environment of the plasma.</text>
</comment>
<comment type="subunit">
    <text evidence="1">Homotetramer.</text>
</comment>
<comment type="subcellular location">
    <subcellularLocation>
        <location evidence="1">Secreted</location>
    </subcellularLocation>
    <subcellularLocation>
        <location evidence="1">Secreted</location>
        <location evidence="1">Extracellular space</location>
    </subcellularLocation>
    <subcellularLocation>
        <location evidence="1">Secreted</location>
        <location evidence="1">Extracellular space</location>
        <location evidence="1">Extracellular matrix</location>
    </subcellularLocation>
</comment>
<comment type="similarity">
    <text evidence="3">Belongs to the apolipoprotein A1/A4/E family.</text>
</comment>
<accession>P0DMT6</accession>
<proteinExistence type="inferred from homology"/>
<evidence type="ECO:0000250" key="1">
    <source>
        <dbReference type="UniProtKB" id="P02649"/>
    </source>
</evidence>
<evidence type="ECO:0000255" key="2"/>
<evidence type="ECO:0000305" key="3"/>
<feature type="signal peptide" evidence="2">
    <location>
        <begin position="1"/>
        <end position="19"/>
    </location>
</feature>
<feature type="chain" id="PRO_0000432749" description="Apolipoprotein E" evidence="2">
    <location>
        <begin position="20"/>
        <end position="258"/>
    </location>
</feature>
<feature type="repeat" description="3">
    <location>
        <begin position="112"/>
        <end position="133"/>
    </location>
</feature>
<feature type="repeat" description="4">
    <location>
        <begin position="134"/>
        <end position="155"/>
    </location>
</feature>
<feature type="repeat" description="5">
    <location>
        <begin position="156"/>
        <end position="173"/>
    </location>
</feature>
<feature type="region of interest" description="3 X 22 AA approximate tandem repeats">
    <location>
        <begin position="112"/>
        <end position="173"/>
    </location>
</feature>
<sequence>MRVWTVLLGAVLLLAACQADVQDVETKVKAKWEETVEVFREYVNRLSLATDDITEQITSSQMGKEMDMLIKDXVAELHAYRKDVEERLGPQAVVMRERLHTDVTVLGERLRVDMEEAKTRVQQYLGEARQVAGQNLEDVRSRVGTYLRKLRKRLAKDTEELRRKLEAYSKEATQHLETVREDLEPLREKGQQRLETLQQALRDQGQRLREQLEVRAQEMRGSLDRAATQLQEWLEPFLEDIRTQMQGLLDKLQXKEQQ</sequence>
<keyword id="KW-0272">Extracellular matrix</keyword>
<keyword id="KW-0445">Lipid transport</keyword>
<keyword id="KW-0446">Lipid-binding</keyword>
<keyword id="KW-0677">Repeat</keyword>
<keyword id="KW-0964">Secreted</keyword>
<keyword id="KW-0732">Signal</keyword>
<keyword id="KW-0813">Transport</keyword>
<dbReference type="EMBL" id="JH738485">
    <property type="status" value="NOT_ANNOTATED_CDS"/>
    <property type="molecule type" value="Genomic_DNA"/>
</dbReference>
<dbReference type="eggNOG" id="ENOG502QVD6">
    <property type="taxonomic scope" value="Eukaryota"/>
</dbReference>
<dbReference type="PhylomeDB" id="P0DMT6"/>
<dbReference type="GO" id="GO:0042627">
    <property type="term" value="C:chylomicron"/>
    <property type="evidence" value="ECO:0007669"/>
    <property type="project" value="TreeGrafter"/>
</dbReference>
<dbReference type="GO" id="GO:0031012">
    <property type="term" value="C:extracellular matrix"/>
    <property type="evidence" value="ECO:0000250"/>
    <property type="project" value="UniProtKB"/>
</dbReference>
<dbReference type="GO" id="GO:0005615">
    <property type="term" value="C:extracellular space"/>
    <property type="evidence" value="ECO:0000250"/>
    <property type="project" value="UniProtKB"/>
</dbReference>
<dbReference type="GO" id="GO:1903561">
    <property type="term" value="C:extracellular vesicle"/>
    <property type="evidence" value="ECO:0007669"/>
    <property type="project" value="TreeGrafter"/>
</dbReference>
<dbReference type="GO" id="GO:0034364">
    <property type="term" value="C:high-density lipoprotein particle"/>
    <property type="evidence" value="ECO:0000250"/>
    <property type="project" value="UniProtKB"/>
</dbReference>
<dbReference type="GO" id="GO:0034363">
    <property type="term" value="C:intermediate-density lipoprotein particle"/>
    <property type="evidence" value="ECO:0000250"/>
    <property type="project" value="UniProtKB"/>
</dbReference>
<dbReference type="GO" id="GO:0034362">
    <property type="term" value="C:low-density lipoprotein particle"/>
    <property type="evidence" value="ECO:0000250"/>
    <property type="project" value="UniProtKB"/>
</dbReference>
<dbReference type="GO" id="GO:0034361">
    <property type="term" value="C:very-low-density lipoprotein particle"/>
    <property type="evidence" value="ECO:0000250"/>
    <property type="project" value="UniProtKB"/>
</dbReference>
<dbReference type="GO" id="GO:0120020">
    <property type="term" value="F:cholesterol transfer activity"/>
    <property type="evidence" value="ECO:0007669"/>
    <property type="project" value="TreeGrafter"/>
</dbReference>
<dbReference type="GO" id="GO:0043395">
    <property type="term" value="F:heparan sulfate proteoglycan binding"/>
    <property type="evidence" value="ECO:0000250"/>
    <property type="project" value="UniProtKB"/>
</dbReference>
<dbReference type="GO" id="GO:0008201">
    <property type="term" value="F:heparin binding"/>
    <property type="evidence" value="ECO:0000250"/>
    <property type="project" value="UniProtKB"/>
</dbReference>
<dbReference type="GO" id="GO:0042802">
    <property type="term" value="F:identical protein binding"/>
    <property type="evidence" value="ECO:0000250"/>
    <property type="project" value="UniProtKB"/>
</dbReference>
<dbReference type="GO" id="GO:0050750">
    <property type="term" value="F:low-density lipoprotein particle receptor binding"/>
    <property type="evidence" value="ECO:0000250"/>
    <property type="project" value="UniProtKB"/>
</dbReference>
<dbReference type="GO" id="GO:0060228">
    <property type="term" value="F:phosphatidylcholine-sterol O-acyltransferase activator activity"/>
    <property type="evidence" value="ECO:0007669"/>
    <property type="project" value="TreeGrafter"/>
</dbReference>
<dbReference type="GO" id="GO:0005543">
    <property type="term" value="F:phospholipid binding"/>
    <property type="evidence" value="ECO:0007669"/>
    <property type="project" value="TreeGrafter"/>
</dbReference>
<dbReference type="GO" id="GO:0055090">
    <property type="term" value="P:acylglycerol homeostasis"/>
    <property type="evidence" value="ECO:0007669"/>
    <property type="project" value="TreeGrafter"/>
</dbReference>
<dbReference type="GO" id="GO:0033344">
    <property type="term" value="P:cholesterol efflux"/>
    <property type="evidence" value="ECO:0000250"/>
    <property type="project" value="UniProtKB"/>
</dbReference>
<dbReference type="GO" id="GO:0008203">
    <property type="term" value="P:cholesterol metabolic process"/>
    <property type="evidence" value="ECO:0007669"/>
    <property type="project" value="TreeGrafter"/>
</dbReference>
<dbReference type="GO" id="GO:0034382">
    <property type="term" value="P:chylomicron remnant clearance"/>
    <property type="evidence" value="ECO:0000250"/>
    <property type="project" value="UniProtKB"/>
</dbReference>
<dbReference type="GO" id="GO:0034380">
    <property type="term" value="P:high-density lipoprotein particle assembly"/>
    <property type="evidence" value="ECO:0000250"/>
    <property type="project" value="UniProtKB"/>
</dbReference>
<dbReference type="GO" id="GO:0071831">
    <property type="term" value="P:intermediate-density lipoprotein particle clearance"/>
    <property type="evidence" value="ECO:0000250"/>
    <property type="project" value="UniProtKB"/>
</dbReference>
<dbReference type="GO" id="GO:0042158">
    <property type="term" value="P:lipoprotein biosynthetic process"/>
    <property type="evidence" value="ECO:0000250"/>
    <property type="project" value="UniProtKB"/>
</dbReference>
<dbReference type="GO" id="GO:1905907">
    <property type="term" value="P:negative regulation of amyloid fibril formation"/>
    <property type="evidence" value="ECO:0000250"/>
    <property type="project" value="UniProtKB"/>
</dbReference>
<dbReference type="GO" id="GO:0033700">
    <property type="term" value="P:phospholipid efflux"/>
    <property type="evidence" value="ECO:0007669"/>
    <property type="project" value="TreeGrafter"/>
</dbReference>
<dbReference type="GO" id="GO:1900223">
    <property type="term" value="P:positive regulation of amyloid-beta clearance"/>
    <property type="evidence" value="ECO:0000250"/>
    <property type="project" value="UniProtKB"/>
</dbReference>
<dbReference type="GO" id="GO:0071830">
    <property type="term" value="P:triglyceride-rich lipoprotein particle clearance"/>
    <property type="evidence" value="ECO:0000250"/>
    <property type="project" value="UniProtKB"/>
</dbReference>
<dbReference type="GO" id="GO:0034447">
    <property type="term" value="P:very-low-density lipoprotein particle clearance"/>
    <property type="evidence" value="ECO:0000250"/>
    <property type="project" value="UniProtKB"/>
</dbReference>
<dbReference type="FunFam" id="1.20.120.20:FF:000010">
    <property type="entry name" value="Apolipoprotein E"/>
    <property type="match status" value="1"/>
</dbReference>
<dbReference type="Gene3D" id="1.20.120.20">
    <property type="entry name" value="Apolipoprotein"/>
    <property type="match status" value="2"/>
</dbReference>
<dbReference type="InterPro" id="IPR000074">
    <property type="entry name" value="ApoA_E"/>
</dbReference>
<dbReference type="InterPro" id="IPR050163">
    <property type="entry name" value="Apolipoprotein_A1/A4/E"/>
</dbReference>
<dbReference type="PANTHER" id="PTHR18976">
    <property type="entry name" value="APOLIPOPROTEIN"/>
    <property type="match status" value="1"/>
</dbReference>
<dbReference type="PANTHER" id="PTHR18976:SF2">
    <property type="entry name" value="APOLIPOPROTEIN E"/>
    <property type="match status" value="1"/>
</dbReference>
<dbReference type="Pfam" id="PF01442">
    <property type="entry name" value="Apolipoprotein"/>
    <property type="match status" value="1"/>
</dbReference>
<dbReference type="SUPFAM" id="SSF58113">
    <property type="entry name" value="Apolipoprotein A-I"/>
    <property type="match status" value="1"/>
</dbReference>